<feature type="peptide" id="PRO_0000044346" description="Pyrokinin-5">
    <location>
        <begin position="1"/>
        <end position="17"/>
    </location>
</feature>
<feature type="modified residue" description="Leucine amide" evidence="3">
    <location>
        <position position="17"/>
    </location>
</feature>
<reference evidence="4" key="1">
    <citation type="submission" date="2005-09" db="UniProtKB">
        <authorList>
            <person name="Predel R."/>
        </authorList>
    </citation>
    <scope>PROTEIN SEQUENCE</scope>
    <scope>TISSUE SPECIFICITY</scope>
    <scope>MASS SPECTROMETRY</scope>
    <scope>AMIDATION AT LEU-17</scope>
    <source>
        <tissue>Abdominal perisympathetic organs</tissue>
    </source>
</reference>
<keyword id="KW-0027">Amidation</keyword>
<keyword id="KW-0903">Direct protein sequencing</keyword>
<keyword id="KW-0527">Neuropeptide</keyword>
<keyword id="KW-0964">Secreted</keyword>
<sequence>GGETSGETKGMWFGPRL</sequence>
<name>PPK5_LAXSP</name>
<protein>
    <recommendedName>
        <fullName>Pyrokinin-5</fullName>
        <shortName>Lax-PK-5</shortName>
    </recommendedName>
    <alternativeName>
        <fullName>FXPRL-amide</fullName>
    </alternativeName>
</protein>
<proteinExistence type="evidence at protein level"/>
<accession>P84669</accession>
<organism>
    <name type="scientific">Laxta sp. (strain Australia)</name>
    <name type="common">Cockroach</name>
    <dbReference type="NCBI Taxonomy" id="344974"/>
    <lineage>
        <taxon>Eukaryota</taxon>
        <taxon>Metazoa</taxon>
        <taxon>Ecdysozoa</taxon>
        <taxon>Arthropoda</taxon>
        <taxon>Hexapoda</taxon>
        <taxon>Insecta</taxon>
        <taxon>Pterygota</taxon>
        <taxon>Neoptera</taxon>
        <taxon>Polyneoptera</taxon>
        <taxon>Dictyoptera</taxon>
        <taxon>Blattodea</taxon>
        <taxon>Blaberoidea</taxon>
        <taxon>Blaberidae</taxon>
        <taxon>Perisphaerinae</taxon>
        <taxon>Laxta</taxon>
    </lineage>
</organism>
<dbReference type="GO" id="GO:0005576">
    <property type="term" value="C:extracellular region"/>
    <property type="evidence" value="ECO:0007669"/>
    <property type="project" value="UniProtKB-SubCell"/>
</dbReference>
<dbReference type="GO" id="GO:0005184">
    <property type="term" value="F:neuropeptide hormone activity"/>
    <property type="evidence" value="ECO:0007669"/>
    <property type="project" value="InterPro"/>
</dbReference>
<dbReference type="GO" id="GO:0007218">
    <property type="term" value="P:neuropeptide signaling pathway"/>
    <property type="evidence" value="ECO:0007669"/>
    <property type="project" value="UniProtKB-KW"/>
</dbReference>
<dbReference type="InterPro" id="IPR001484">
    <property type="entry name" value="Pyrokinin_CS"/>
</dbReference>
<dbReference type="PROSITE" id="PS00539">
    <property type="entry name" value="PYROKININ"/>
    <property type="match status" value="1"/>
</dbReference>
<evidence type="ECO:0000250" key="1">
    <source>
        <dbReference type="UniProtKB" id="P84594"/>
    </source>
</evidence>
<evidence type="ECO:0000255" key="2"/>
<evidence type="ECO:0000269" key="3">
    <source ref="1"/>
</evidence>
<evidence type="ECO:0000305" key="4"/>
<comment type="function">
    <text evidence="1">Myoactive.</text>
</comment>
<comment type="subcellular location">
    <subcellularLocation>
        <location evidence="4">Secreted</location>
    </subcellularLocation>
</comment>
<comment type="tissue specificity">
    <text evidence="3">Expressed in abdominal perisympathetic organs and abdominal ganglia.</text>
</comment>
<comment type="mass spectrometry">
    <text>With amidation.</text>
</comment>
<comment type="similarity">
    <text evidence="2">Belongs to the pyrokinin family.</text>
</comment>